<proteinExistence type="inferred from homology"/>
<accession>O32262</accession>
<accession>O07000</accession>
<keyword id="KW-1003">Cell membrane</keyword>
<keyword id="KW-0472">Membrane</keyword>
<keyword id="KW-1185">Reference proteome</keyword>
<keyword id="KW-0812">Transmembrane</keyword>
<keyword id="KW-1133">Transmembrane helix</keyword>
<keyword id="KW-0813">Transport</keyword>
<dbReference type="EMBL" id="Z94043">
    <property type="protein sequence ID" value="CAB08048.1"/>
    <property type="status" value="ALT_INIT"/>
    <property type="molecule type" value="Genomic_DNA"/>
</dbReference>
<dbReference type="EMBL" id="AL009126">
    <property type="protein sequence ID" value="CAB15454.1"/>
    <property type="molecule type" value="Genomic_DNA"/>
</dbReference>
<dbReference type="PIR" id="B70035">
    <property type="entry name" value="B70035"/>
</dbReference>
<dbReference type="RefSeq" id="WP_003242480.1">
    <property type="nucleotide sequence ID" value="NZ_OZ025638.1"/>
</dbReference>
<dbReference type="SMR" id="O32262"/>
<dbReference type="FunCoup" id="O32262">
    <property type="interactions" value="20"/>
</dbReference>
<dbReference type="STRING" id="224308.BSU34490"/>
<dbReference type="PaxDb" id="224308-BSU34490"/>
<dbReference type="DNASU" id="936401"/>
<dbReference type="EnsemblBacteria" id="CAB15454">
    <property type="protein sequence ID" value="CAB15454"/>
    <property type="gene ID" value="BSU_34490"/>
</dbReference>
<dbReference type="GeneID" id="936401"/>
<dbReference type="KEGG" id="bsu:BSU34490"/>
<dbReference type="PATRIC" id="fig|224308.179.peg.3736"/>
<dbReference type="eggNOG" id="COG2076">
    <property type="taxonomic scope" value="Bacteria"/>
</dbReference>
<dbReference type="InParanoid" id="O32262"/>
<dbReference type="OrthoDB" id="2168659at2"/>
<dbReference type="PhylomeDB" id="O32262"/>
<dbReference type="BioCyc" id="BSUB:BSU34490-MONOMER"/>
<dbReference type="Proteomes" id="UP000001570">
    <property type="component" value="Chromosome"/>
</dbReference>
<dbReference type="GO" id="GO:0005886">
    <property type="term" value="C:plasma membrane"/>
    <property type="evidence" value="ECO:0000318"/>
    <property type="project" value="GO_Central"/>
</dbReference>
<dbReference type="GO" id="GO:0022857">
    <property type="term" value="F:transmembrane transporter activity"/>
    <property type="evidence" value="ECO:0000318"/>
    <property type="project" value="GO_Central"/>
</dbReference>
<dbReference type="GO" id="GO:0055085">
    <property type="term" value="P:transmembrane transport"/>
    <property type="evidence" value="ECO:0000318"/>
    <property type="project" value="GO_Central"/>
</dbReference>
<dbReference type="Gene3D" id="1.10.3730.20">
    <property type="match status" value="1"/>
</dbReference>
<dbReference type="InterPro" id="IPR000390">
    <property type="entry name" value="Small_drug/metabolite_transptr"/>
</dbReference>
<dbReference type="InterPro" id="IPR045324">
    <property type="entry name" value="Small_multidrug_res"/>
</dbReference>
<dbReference type="PANTHER" id="PTHR30561:SF0">
    <property type="entry name" value="GUANIDINIUM EXPORTER"/>
    <property type="match status" value="1"/>
</dbReference>
<dbReference type="PANTHER" id="PTHR30561">
    <property type="entry name" value="SMR FAMILY PROTON-DEPENDENT DRUG EFFLUX TRANSPORTER SUGE"/>
    <property type="match status" value="1"/>
</dbReference>
<dbReference type="Pfam" id="PF00893">
    <property type="entry name" value="Multi_Drug_Res"/>
    <property type="match status" value="1"/>
</dbReference>
<dbReference type="SUPFAM" id="SSF103481">
    <property type="entry name" value="Multidrug resistance efflux transporter EmrE"/>
    <property type="match status" value="1"/>
</dbReference>
<feature type="chain" id="PRO_0000108116" description="Uncharacterized membrane protein YvdS">
    <location>
        <begin position="1"/>
        <end position="111"/>
    </location>
</feature>
<feature type="transmembrane region" description="Helical" evidence="1">
    <location>
        <begin position="3"/>
        <end position="23"/>
    </location>
</feature>
<feature type="transmembrane region" description="Helical" evidence="1">
    <location>
        <begin position="24"/>
        <end position="44"/>
    </location>
</feature>
<feature type="transmembrane region" description="Helical" evidence="1">
    <location>
        <begin position="54"/>
        <end position="74"/>
    </location>
</feature>
<feature type="transmembrane region" description="Helical" evidence="1">
    <location>
        <begin position="80"/>
        <end position="100"/>
    </location>
</feature>
<organism>
    <name type="scientific">Bacillus subtilis (strain 168)</name>
    <dbReference type="NCBI Taxonomy" id="224308"/>
    <lineage>
        <taxon>Bacteria</taxon>
        <taxon>Bacillati</taxon>
        <taxon>Bacillota</taxon>
        <taxon>Bacilli</taxon>
        <taxon>Bacillales</taxon>
        <taxon>Bacillaceae</taxon>
        <taxon>Bacillus</taxon>
    </lineage>
</organism>
<gene>
    <name type="primary">yvdS</name>
    <name type="ordered locus">BSU34490</name>
</gene>
<comment type="subcellular location">
    <subcellularLocation>
        <location evidence="2">Cell membrane</location>
        <topology evidence="2">Multi-pass membrane protein</topology>
    </subcellularLocation>
</comment>
<comment type="similarity">
    <text evidence="2">Belongs to the drug/metabolite transporter (DMT) superfamily. Small multidrug resistance (SMR) (TC 2.A.7.1) family.</text>
</comment>
<comment type="sequence caution" evidence="2">
    <conflict type="erroneous initiation">
        <sequence resource="EMBL-CDS" id="CAB08048"/>
    </conflict>
</comment>
<name>YVDS_BACSU</name>
<protein>
    <recommendedName>
        <fullName>Uncharacterized membrane protein YvdS</fullName>
    </recommendedName>
</protein>
<sequence>MNWVLVFIAGLLEVVWASSLKHADSLLDWIIIFILIAVSFILLIRSYQKIPMAAAYTVFVGIGTVGTYLTGIVLGESFSAAQMFFLALLLAGILGMKLFTKESKSQPGGEK</sequence>
<reference key="1">
    <citation type="submission" date="1997-04" db="EMBL/GenBank/DDBJ databases">
        <authorList>
            <person name="Denizot F."/>
        </authorList>
    </citation>
    <scope>NUCLEOTIDE SEQUENCE [GENOMIC DNA]</scope>
    <source>
        <strain>168</strain>
    </source>
</reference>
<reference key="2">
    <citation type="journal article" date="1997" name="Nature">
        <title>The complete genome sequence of the Gram-positive bacterium Bacillus subtilis.</title>
        <authorList>
            <person name="Kunst F."/>
            <person name="Ogasawara N."/>
            <person name="Moszer I."/>
            <person name="Albertini A.M."/>
            <person name="Alloni G."/>
            <person name="Azevedo V."/>
            <person name="Bertero M.G."/>
            <person name="Bessieres P."/>
            <person name="Bolotin A."/>
            <person name="Borchert S."/>
            <person name="Borriss R."/>
            <person name="Boursier L."/>
            <person name="Brans A."/>
            <person name="Braun M."/>
            <person name="Brignell S.C."/>
            <person name="Bron S."/>
            <person name="Brouillet S."/>
            <person name="Bruschi C.V."/>
            <person name="Caldwell B."/>
            <person name="Capuano V."/>
            <person name="Carter N.M."/>
            <person name="Choi S.-K."/>
            <person name="Codani J.-J."/>
            <person name="Connerton I.F."/>
            <person name="Cummings N.J."/>
            <person name="Daniel R.A."/>
            <person name="Denizot F."/>
            <person name="Devine K.M."/>
            <person name="Duesterhoeft A."/>
            <person name="Ehrlich S.D."/>
            <person name="Emmerson P.T."/>
            <person name="Entian K.-D."/>
            <person name="Errington J."/>
            <person name="Fabret C."/>
            <person name="Ferrari E."/>
            <person name="Foulger D."/>
            <person name="Fritz C."/>
            <person name="Fujita M."/>
            <person name="Fujita Y."/>
            <person name="Fuma S."/>
            <person name="Galizzi A."/>
            <person name="Galleron N."/>
            <person name="Ghim S.-Y."/>
            <person name="Glaser P."/>
            <person name="Goffeau A."/>
            <person name="Golightly E.J."/>
            <person name="Grandi G."/>
            <person name="Guiseppi G."/>
            <person name="Guy B.J."/>
            <person name="Haga K."/>
            <person name="Haiech J."/>
            <person name="Harwood C.R."/>
            <person name="Henaut A."/>
            <person name="Hilbert H."/>
            <person name="Holsappel S."/>
            <person name="Hosono S."/>
            <person name="Hullo M.-F."/>
            <person name="Itaya M."/>
            <person name="Jones L.-M."/>
            <person name="Joris B."/>
            <person name="Karamata D."/>
            <person name="Kasahara Y."/>
            <person name="Klaerr-Blanchard M."/>
            <person name="Klein C."/>
            <person name="Kobayashi Y."/>
            <person name="Koetter P."/>
            <person name="Koningstein G."/>
            <person name="Krogh S."/>
            <person name="Kumano M."/>
            <person name="Kurita K."/>
            <person name="Lapidus A."/>
            <person name="Lardinois S."/>
            <person name="Lauber J."/>
            <person name="Lazarevic V."/>
            <person name="Lee S.-M."/>
            <person name="Levine A."/>
            <person name="Liu H."/>
            <person name="Masuda S."/>
            <person name="Mauel C."/>
            <person name="Medigue C."/>
            <person name="Medina N."/>
            <person name="Mellado R.P."/>
            <person name="Mizuno M."/>
            <person name="Moestl D."/>
            <person name="Nakai S."/>
            <person name="Noback M."/>
            <person name="Noone D."/>
            <person name="O'Reilly M."/>
            <person name="Ogawa K."/>
            <person name="Ogiwara A."/>
            <person name="Oudega B."/>
            <person name="Park S.-H."/>
            <person name="Parro V."/>
            <person name="Pohl T.M."/>
            <person name="Portetelle D."/>
            <person name="Porwollik S."/>
            <person name="Prescott A.M."/>
            <person name="Presecan E."/>
            <person name="Pujic P."/>
            <person name="Purnelle B."/>
            <person name="Rapoport G."/>
            <person name="Rey M."/>
            <person name="Reynolds S."/>
            <person name="Rieger M."/>
            <person name="Rivolta C."/>
            <person name="Rocha E."/>
            <person name="Roche B."/>
            <person name="Rose M."/>
            <person name="Sadaie Y."/>
            <person name="Sato T."/>
            <person name="Scanlan E."/>
            <person name="Schleich S."/>
            <person name="Schroeter R."/>
            <person name="Scoffone F."/>
            <person name="Sekiguchi J."/>
            <person name="Sekowska A."/>
            <person name="Seror S.J."/>
            <person name="Serror P."/>
            <person name="Shin B.-S."/>
            <person name="Soldo B."/>
            <person name="Sorokin A."/>
            <person name="Tacconi E."/>
            <person name="Takagi T."/>
            <person name="Takahashi H."/>
            <person name="Takemaru K."/>
            <person name="Takeuchi M."/>
            <person name="Tamakoshi A."/>
            <person name="Tanaka T."/>
            <person name="Terpstra P."/>
            <person name="Tognoni A."/>
            <person name="Tosato V."/>
            <person name="Uchiyama S."/>
            <person name="Vandenbol M."/>
            <person name="Vannier F."/>
            <person name="Vassarotti A."/>
            <person name="Viari A."/>
            <person name="Wambutt R."/>
            <person name="Wedler E."/>
            <person name="Wedler H."/>
            <person name="Weitzenegger T."/>
            <person name="Winters P."/>
            <person name="Wipat A."/>
            <person name="Yamamoto H."/>
            <person name="Yamane K."/>
            <person name="Yasumoto K."/>
            <person name="Yata K."/>
            <person name="Yoshida K."/>
            <person name="Yoshikawa H.-F."/>
            <person name="Zumstein E."/>
            <person name="Yoshikawa H."/>
            <person name="Danchin A."/>
        </authorList>
    </citation>
    <scope>NUCLEOTIDE SEQUENCE [LARGE SCALE GENOMIC DNA]</scope>
    <source>
        <strain>168</strain>
    </source>
</reference>
<evidence type="ECO:0000255" key="1"/>
<evidence type="ECO:0000305" key="2"/>